<feature type="chain" id="PRO_0000369899" description="Serine hydroxymethyltransferase">
    <location>
        <begin position="1"/>
        <end position="433"/>
    </location>
</feature>
<feature type="binding site" evidence="1">
    <location>
        <position position="131"/>
    </location>
    <ligand>
        <name>(6S)-5,6,7,8-tetrahydrofolate</name>
        <dbReference type="ChEBI" id="CHEBI:57453"/>
    </ligand>
</feature>
<feature type="binding site" evidence="1">
    <location>
        <begin position="135"/>
        <end position="137"/>
    </location>
    <ligand>
        <name>(6S)-5,6,7,8-tetrahydrofolate</name>
        <dbReference type="ChEBI" id="CHEBI:57453"/>
    </ligand>
</feature>
<feature type="site" description="Plays an important role in substrate specificity" evidence="1">
    <location>
        <position position="239"/>
    </location>
</feature>
<feature type="modified residue" description="N6-(pyridoxal phosphate)lysine" evidence="1">
    <location>
        <position position="240"/>
    </location>
</feature>
<evidence type="ECO:0000255" key="1">
    <source>
        <dbReference type="HAMAP-Rule" id="MF_00051"/>
    </source>
</evidence>
<keyword id="KW-0028">Amino-acid biosynthesis</keyword>
<keyword id="KW-0963">Cytoplasm</keyword>
<keyword id="KW-0554">One-carbon metabolism</keyword>
<keyword id="KW-0663">Pyridoxal phosphate</keyword>
<keyword id="KW-1185">Reference proteome</keyword>
<keyword id="KW-0808">Transferase</keyword>
<accession>A1A1V0</accession>
<protein>
    <recommendedName>
        <fullName evidence="1">Serine hydroxymethyltransferase</fullName>
        <shortName evidence="1">SHMT</shortName>
        <shortName evidence="1">Serine methylase</shortName>
        <ecNumber evidence="1">2.1.2.1</ecNumber>
    </recommendedName>
</protein>
<gene>
    <name evidence="1" type="primary">glyA</name>
    <name type="ordered locus">BAD_0902</name>
</gene>
<organism>
    <name type="scientific">Bifidobacterium adolescentis (strain ATCC 15703 / DSM 20083 / NCTC 11814 / E194a)</name>
    <dbReference type="NCBI Taxonomy" id="367928"/>
    <lineage>
        <taxon>Bacteria</taxon>
        <taxon>Bacillati</taxon>
        <taxon>Actinomycetota</taxon>
        <taxon>Actinomycetes</taxon>
        <taxon>Bifidobacteriales</taxon>
        <taxon>Bifidobacteriaceae</taxon>
        <taxon>Bifidobacterium</taxon>
    </lineage>
</organism>
<sequence>MTASPLAQTPNDMFNAPIAEADPEIAEILDAELSRQQNGLEMIASENFVPRAVLQAQGSVLTNKYAEGYPGRRYYGGCEQVDKIETIARERAKSLFGAEYANVQPHSGAQANAAVYQALVKPGDTVLGLALDHGGHLTHGMKINFSGRFYHAEAYGVNPETFRIDPEIIRQRALETHPAMIIGGWSAYPRIEDFKAMKEIADEVGAKFWVDMAHFAGLVAAGLHPSPVPYADVVSSTAHKTLGGPRSGFILAKQEYAKKLNSAVFPGQQGGPLMHVIAGKAVAFKVAATPEFKDRMQRTLDGAKILAERLMADDVKNNGISVLTGGTDVHLVMVDLRNSEMDGKQGEDLLAQCGITINRNTVPFDPRPASVASGLRIGTSALATRGFGPKEYEEVADIIGTALAAGQDVDALKARVDKLAEDFPLYPGLDQIH</sequence>
<comment type="function">
    <text evidence="1">Catalyzes the reversible interconversion of serine and glycine with tetrahydrofolate (THF) serving as the one-carbon carrier. This reaction serves as the major source of one-carbon groups required for the biosynthesis of purines, thymidylate, methionine, and other important biomolecules. Also exhibits THF-independent aldolase activity toward beta-hydroxyamino acids, producing glycine and aldehydes, via a retro-aldol mechanism.</text>
</comment>
<comment type="catalytic activity">
    <reaction evidence="1">
        <text>(6R)-5,10-methylene-5,6,7,8-tetrahydrofolate + glycine + H2O = (6S)-5,6,7,8-tetrahydrofolate + L-serine</text>
        <dbReference type="Rhea" id="RHEA:15481"/>
        <dbReference type="ChEBI" id="CHEBI:15377"/>
        <dbReference type="ChEBI" id="CHEBI:15636"/>
        <dbReference type="ChEBI" id="CHEBI:33384"/>
        <dbReference type="ChEBI" id="CHEBI:57305"/>
        <dbReference type="ChEBI" id="CHEBI:57453"/>
        <dbReference type="EC" id="2.1.2.1"/>
    </reaction>
</comment>
<comment type="cofactor">
    <cofactor evidence="1">
        <name>pyridoxal 5'-phosphate</name>
        <dbReference type="ChEBI" id="CHEBI:597326"/>
    </cofactor>
</comment>
<comment type="pathway">
    <text evidence="1">One-carbon metabolism; tetrahydrofolate interconversion.</text>
</comment>
<comment type="pathway">
    <text evidence="1">Amino-acid biosynthesis; glycine biosynthesis; glycine from L-serine: step 1/1.</text>
</comment>
<comment type="subunit">
    <text evidence="1">Homodimer.</text>
</comment>
<comment type="subcellular location">
    <subcellularLocation>
        <location evidence="1">Cytoplasm</location>
    </subcellularLocation>
</comment>
<comment type="similarity">
    <text evidence="1">Belongs to the SHMT family.</text>
</comment>
<proteinExistence type="inferred from homology"/>
<name>GLYA_BIFAA</name>
<dbReference type="EC" id="2.1.2.1" evidence="1"/>
<dbReference type="EMBL" id="AP009256">
    <property type="protein sequence ID" value="BAF39683.1"/>
    <property type="molecule type" value="Genomic_DNA"/>
</dbReference>
<dbReference type="RefSeq" id="WP_011743261.1">
    <property type="nucleotide sequence ID" value="NC_008618.1"/>
</dbReference>
<dbReference type="SMR" id="A1A1V0"/>
<dbReference type="STRING" id="367928.BAD_0902"/>
<dbReference type="PaxDb" id="1680-BADO_0950"/>
<dbReference type="GeneID" id="4556168"/>
<dbReference type="KEGG" id="bad:BAD_0902"/>
<dbReference type="HOGENOM" id="CLU_022477_2_1_11"/>
<dbReference type="UniPathway" id="UPA00193"/>
<dbReference type="UniPathway" id="UPA00288">
    <property type="reaction ID" value="UER01023"/>
</dbReference>
<dbReference type="Proteomes" id="UP000008702">
    <property type="component" value="Chromosome"/>
</dbReference>
<dbReference type="GO" id="GO:0005829">
    <property type="term" value="C:cytosol"/>
    <property type="evidence" value="ECO:0007669"/>
    <property type="project" value="TreeGrafter"/>
</dbReference>
<dbReference type="GO" id="GO:0004372">
    <property type="term" value="F:glycine hydroxymethyltransferase activity"/>
    <property type="evidence" value="ECO:0007669"/>
    <property type="project" value="UniProtKB-UniRule"/>
</dbReference>
<dbReference type="GO" id="GO:0030170">
    <property type="term" value="F:pyridoxal phosphate binding"/>
    <property type="evidence" value="ECO:0007669"/>
    <property type="project" value="UniProtKB-UniRule"/>
</dbReference>
<dbReference type="GO" id="GO:0019264">
    <property type="term" value="P:glycine biosynthetic process from serine"/>
    <property type="evidence" value="ECO:0007669"/>
    <property type="project" value="UniProtKB-UniRule"/>
</dbReference>
<dbReference type="GO" id="GO:0035999">
    <property type="term" value="P:tetrahydrofolate interconversion"/>
    <property type="evidence" value="ECO:0007669"/>
    <property type="project" value="UniProtKB-UniRule"/>
</dbReference>
<dbReference type="CDD" id="cd00378">
    <property type="entry name" value="SHMT"/>
    <property type="match status" value="1"/>
</dbReference>
<dbReference type="FunFam" id="3.40.640.10:FF:000001">
    <property type="entry name" value="Serine hydroxymethyltransferase"/>
    <property type="match status" value="1"/>
</dbReference>
<dbReference type="Gene3D" id="3.90.1150.10">
    <property type="entry name" value="Aspartate Aminotransferase, domain 1"/>
    <property type="match status" value="1"/>
</dbReference>
<dbReference type="Gene3D" id="3.40.640.10">
    <property type="entry name" value="Type I PLP-dependent aspartate aminotransferase-like (Major domain)"/>
    <property type="match status" value="1"/>
</dbReference>
<dbReference type="HAMAP" id="MF_00051">
    <property type="entry name" value="SHMT"/>
    <property type="match status" value="1"/>
</dbReference>
<dbReference type="InterPro" id="IPR015424">
    <property type="entry name" value="PyrdxlP-dep_Trfase"/>
</dbReference>
<dbReference type="InterPro" id="IPR015421">
    <property type="entry name" value="PyrdxlP-dep_Trfase_major"/>
</dbReference>
<dbReference type="InterPro" id="IPR015422">
    <property type="entry name" value="PyrdxlP-dep_Trfase_small"/>
</dbReference>
<dbReference type="InterPro" id="IPR001085">
    <property type="entry name" value="Ser_HO-MeTrfase"/>
</dbReference>
<dbReference type="InterPro" id="IPR049943">
    <property type="entry name" value="Ser_HO-MeTrfase-like"/>
</dbReference>
<dbReference type="InterPro" id="IPR039429">
    <property type="entry name" value="SHMT-like_dom"/>
</dbReference>
<dbReference type="NCBIfam" id="NF000586">
    <property type="entry name" value="PRK00011.1"/>
    <property type="match status" value="1"/>
</dbReference>
<dbReference type="PANTHER" id="PTHR11680">
    <property type="entry name" value="SERINE HYDROXYMETHYLTRANSFERASE"/>
    <property type="match status" value="1"/>
</dbReference>
<dbReference type="PANTHER" id="PTHR11680:SF35">
    <property type="entry name" value="SERINE HYDROXYMETHYLTRANSFERASE 1"/>
    <property type="match status" value="1"/>
</dbReference>
<dbReference type="Pfam" id="PF00464">
    <property type="entry name" value="SHMT"/>
    <property type="match status" value="1"/>
</dbReference>
<dbReference type="PIRSF" id="PIRSF000412">
    <property type="entry name" value="SHMT"/>
    <property type="match status" value="1"/>
</dbReference>
<dbReference type="SUPFAM" id="SSF53383">
    <property type="entry name" value="PLP-dependent transferases"/>
    <property type="match status" value="1"/>
</dbReference>
<reference key="1">
    <citation type="submission" date="2006-12" db="EMBL/GenBank/DDBJ databases">
        <title>Bifidobacterium adolescentis complete genome sequence.</title>
        <authorList>
            <person name="Suzuki T."/>
            <person name="Tsuda Y."/>
            <person name="Kanou N."/>
            <person name="Inoue T."/>
            <person name="Kumazaki K."/>
            <person name="Nagano S."/>
            <person name="Hirai S."/>
            <person name="Tanaka K."/>
            <person name="Watanabe K."/>
        </authorList>
    </citation>
    <scope>NUCLEOTIDE SEQUENCE [LARGE SCALE GENOMIC DNA]</scope>
    <source>
        <strain>ATCC 15703 / DSM 20083 / NCTC 11814 / E194a</strain>
    </source>
</reference>